<organism>
    <name type="scientific">Streptococcus agalactiae serotype V (strain ATCC BAA-611 / 2603 V/R)</name>
    <dbReference type="NCBI Taxonomy" id="208435"/>
    <lineage>
        <taxon>Bacteria</taxon>
        <taxon>Bacillati</taxon>
        <taxon>Bacillota</taxon>
        <taxon>Bacilli</taxon>
        <taxon>Lactobacillales</taxon>
        <taxon>Streptococcaceae</taxon>
        <taxon>Streptococcus</taxon>
    </lineage>
</organism>
<dbReference type="EC" id="2.7.13.3"/>
<dbReference type="EMBL" id="AE009948">
    <property type="protein sequence ID" value="AAM99089.1"/>
    <property type="molecule type" value="Genomic_DNA"/>
</dbReference>
<dbReference type="RefSeq" id="NP_687217.1">
    <property type="nucleotide sequence ID" value="NC_004116.1"/>
</dbReference>
<dbReference type="RefSeq" id="WP_000930334.1">
    <property type="nucleotide sequence ID" value="NC_004116.1"/>
</dbReference>
<dbReference type="SMR" id="Q8E218"/>
<dbReference type="STRING" id="208435.SAG0182"/>
<dbReference type="KEGG" id="sag:SAG0182"/>
<dbReference type="PATRIC" id="fig|208435.3.peg.182"/>
<dbReference type="HOGENOM" id="CLU_020473_3_3_9"/>
<dbReference type="OrthoDB" id="9776552at2"/>
<dbReference type="Proteomes" id="UP000000821">
    <property type="component" value="Chromosome"/>
</dbReference>
<dbReference type="GO" id="GO:0005886">
    <property type="term" value="C:plasma membrane"/>
    <property type="evidence" value="ECO:0007669"/>
    <property type="project" value="UniProtKB-SubCell"/>
</dbReference>
<dbReference type="GO" id="GO:0005524">
    <property type="term" value="F:ATP binding"/>
    <property type="evidence" value="ECO:0007669"/>
    <property type="project" value="UniProtKB-KW"/>
</dbReference>
<dbReference type="GO" id="GO:0000155">
    <property type="term" value="F:phosphorelay sensor kinase activity"/>
    <property type="evidence" value="ECO:0007669"/>
    <property type="project" value="InterPro"/>
</dbReference>
<dbReference type="GO" id="GO:0071555">
    <property type="term" value="P:cell wall organization"/>
    <property type="evidence" value="ECO:0007669"/>
    <property type="project" value="InterPro"/>
</dbReference>
<dbReference type="CDD" id="cd16957">
    <property type="entry name" value="HATPase_LytS-like"/>
    <property type="match status" value="1"/>
</dbReference>
<dbReference type="Gene3D" id="3.30.450.40">
    <property type="match status" value="1"/>
</dbReference>
<dbReference type="Gene3D" id="3.30.565.10">
    <property type="entry name" value="Histidine kinase-like ATPase, C-terminal domain"/>
    <property type="match status" value="1"/>
</dbReference>
<dbReference type="InterPro" id="IPR050640">
    <property type="entry name" value="Bact_2-comp_sensor_kinase"/>
</dbReference>
<dbReference type="InterPro" id="IPR029016">
    <property type="entry name" value="GAF-like_dom_sf"/>
</dbReference>
<dbReference type="InterPro" id="IPR036890">
    <property type="entry name" value="HATPase_C_sf"/>
</dbReference>
<dbReference type="InterPro" id="IPR010559">
    <property type="entry name" value="Sig_transdc_His_kin_internal"/>
</dbReference>
<dbReference type="InterPro" id="IPR011620">
    <property type="entry name" value="Sig_transdc_His_kinase_LytS_TM"/>
</dbReference>
<dbReference type="PANTHER" id="PTHR34220">
    <property type="entry name" value="SENSOR HISTIDINE KINASE YPDA"/>
    <property type="match status" value="1"/>
</dbReference>
<dbReference type="PANTHER" id="PTHR34220:SF7">
    <property type="entry name" value="SENSOR HISTIDINE KINASE YPDA"/>
    <property type="match status" value="1"/>
</dbReference>
<dbReference type="Pfam" id="PF07694">
    <property type="entry name" value="5TM-5TMR_LYT"/>
    <property type="match status" value="1"/>
</dbReference>
<dbReference type="Pfam" id="PF02518">
    <property type="entry name" value="HATPase_c"/>
    <property type="match status" value="1"/>
</dbReference>
<dbReference type="Pfam" id="PF06580">
    <property type="entry name" value="His_kinase"/>
    <property type="match status" value="1"/>
</dbReference>
<dbReference type="SMART" id="SM00387">
    <property type="entry name" value="HATPase_c"/>
    <property type="match status" value="1"/>
</dbReference>
<dbReference type="SUPFAM" id="SSF55874">
    <property type="entry name" value="ATPase domain of HSP90 chaperone/DNA topoisomerase II/histidine kinase"/>
    <property type="match status" value="1"/>
</dbReference>
<dbReference type="SUPFAM" id="SSF55781">
    <property type="entry name" value="GAF domain-like"/>
    <property type="match status" value="1"/>
</dbReference>
<sequence>MLMVLLFQRLGIIMILAFLLVNNSYFRQLIEERSKRETVVLVIIFGLFVIISNITGIEIKGDRSLVERPFLTTISHSDSLANTRTLVITTASLVGGPLVGSIVGFIGGVHRFFQGSFSGSFYIVSSVLVGIVSGKIGDKLKENHLYPSTSQVILISIIAESIQMLFVGIFTGWELVKMIVIPMMILNSLGSTLFLAILKTYLSNESQLRAVQTRDVLELTRQTLPYLRQGLTPQSARSVCEIIKRHTNFDAVGLTDRSNVLAHIGVGHDHHIAGQPVKTDLSKSVIFDGEPRIAQDKAAISCPDHNCQLNSAIVVPLKINDKTVGALKMYFAGDKTMSEVEENLVLGLAQIFSGQLAMGITEEQNKLASMAEIKALQAQINPHFFFNAINTISALIRIDSDKARYALMQLSTFFRTSLQGGQDREVTLEQEKSHVDAYMNVEKLRFPDKYQLSYDISAPEKMKLPPFGLQVLVENAVRHAFKERKTDNHILVQIKPDGHYYCVSVSDNGQGISDTIIDKLGQETVAESKGTGTALVNLNNRLNLLYGSVSCLHFSSDKNGTKVWYRIPNRIREDEHENFNS</sequence>
<protein>
    <recommendedName>
        <fullName>Sensor protein LytS</fullName>
        <ecNumber>2.7.13.3</ecNumber>
    </recommendedName>
</protein>
<name>LYTS_STRA5</name>
<accession>Q8E218</accession>
<reference key="1">
    <citation type="journal article" date="2002" name="Proc. Natl. Acad. Sci. U.S.A.">
        <title>Complete genome sequence and comparative genomic analysis of an emerging human pathogen, serotype V Streptococcus agalactiae.</title>
        <authorList>
            <person name="Tettelin H."/>
            <person name="Masignani V."/>
            <person name="Cieslewicz M.J."/>
            <person name="Eisen J.A."/>
            <person name="Peterson S.N."/>
            <person name="Wessels M.R."/>
            <person name="Paulsen I.T."/>
            <person name="Nelson K.E."/>
            <person name="Margarit I."/>
            <person name="Read T.D."/>
            <person name="Madoff L.C."/>
            <person name="Wolf A.M."/>
            <person name="Beanan M.J."/>
            <person name="Brinkac L.M."/>
            <person name="Daugherty S.C."/>
            <person name="DeBoy R.T."/>
            <person name="Durkin A.S."/>
            <person name="Kolonay J.F."/>
            <person name="Madupu R."/>
            <person name="Lewis M.R."/>
            <person name="Radune D."/>
            <person name="Fedorova N.B."/>
            <person name="Scanlan D."/>
            <person name="Khouri H.M."/>
            <person name="Mulligan S."/>
            <person name="Carty H.A."/>
            <person name="Cline R.T."/>
            <person name="Van Aken S.E."/>
            <person name="Gill J."/>
            <person name="Scarselli M."/>
            <person name="Mora M."/>
            <person name="Iacobini E.T."/>
            <person name="Brettoni C."/>
            <person name="Galli G."/>
            <person name="Mariani M."/>
            <person name="Vegni F."/>
            <person name="Maione D."/>
            <person name="Rinaudo D."/>
            <person name="Rappuoli R."/>
            <person name="Telford J.L."/>
            <person name="Kasper D.L."/>
            <person name="Grandi G."/>
            <person name="Fraser C.M."/>
        </authorList>
    </citation>
    <scope>NUCLEOTIDE SEQUENCE [LARGE SCALE GENOMIC DNA]</scope>
    <source>
        <strain>ATCC BAA-611 / 2603 V/R</strain>
    </source>
</reference>
<feature type="chain" id="PRO_0000074802" description="Sensor protein LytS">
    <location>
        <begin position="1"/>
        <end position="581"/>
    </location>
</feature>
<feature type="transmembrane region" description="Helical" evidence="2">
    <location>
        <begin position="4"/>
        <end position="26"/>
    </location>
</feature>
<feature type="transmembrane region" description="Helical" evidence="2">
    <location>
        <begin position="38"/>
        <end position="57"/>
    </location>
</feature>
<feature type="transmembrane region" description="Helical" evidence="2">
    <location>
        <begin position="86"/>
        <end position="108"/>
    </location>
</feature>
<feature type="transmembrane region" description="Helical" evidence="2">
    <location>
        <begin position="115"/>
        <end position="137"/>
    </location>
</feature>
<feature type="transmembrane region" description="Helical" evidence="2">
    <location>
        <begin position="152"/>
        <end position="174"/>
    </location>
</feature>
<feature type="transmembrane region" description="Helical" evidence="2">
    <location>
        <begin position="179"/>
        <end position="198"/>
    </location>
</feature>
<feature type="domain" description="GAF">
    <location>
        <begin position="231"/>
        <end position="355"/>
    </location>
</feature>
<feature type="domain" description="Histidine kinase">
    <location>
        <begin position="356"/>
        <end position="571"/>
    </location>
</feature>
<feature type="modified residue" description="Phosphohistidine; by autocatalysis" evidence="1">
    <location>
        <position position="383"/>
    </location>
</feature>
<evidence type="ECO:0000250" key="1"/>
<evidence type="ECO:0000255" key="2"/>
<gene>
    <name type="primary">lytS</name>
    <name type="ordered locus">SAG0182</name>
</gene>
<proteinExistence type="inferred from homology"/>
<comment type="function">
    <text evidence="1">Member of the two-component regulatory system LytR/LytS that probably regulates genes involved in cell wall metabolism.</text>
</comment>
<comment type="catalytic activity">
    <reaction>
        <text>ATP + protein L-histidine = ADP + protein N-phospho-L-histidine.</text>
        <dbReference type="EC" id="2.7.13.3"/>
    </reaction>
</comment>
<comment type="subcellular location">
    <subcellularLocation>
        <location evidence="1">Cell membrane</location>
        <topology evidence="1">Multi-pass membrane protein</topology>
    </subcellularLocation>
</comment>
<keyword id="KW-0067">ATP-binding</keyword>
<keyword id="KW-1003">Cell membrane</keyword>
<keyword id="KW-0418">Kinase</keyword>
<keyword id="KW-0472">Membrane</keyword>
<keyword id="KW-0547">Nucleotide-binding</keyword>
<keyword id="KW-0597">Phosphoprotein</keyword>
<keyword id="KW-1185">Reference proteome</keyword>
<keyword id="KW-0808">Transferase</keyword>
<keyword id="KW-0812">Transmembrane</keyword>
<keyword id="KW-1133">Transmembrane helix</keyword>
<keyword id="KW-0902">Two-component regulatory system</keyword>